<organism>
    <name type="scientific">Trichophyton rubrum</name>
    <name type="common">Athlete's foot fungus</name>
    <name type="synonym">Epidermophyton rubrum</name>
    <dbReference type="NCBI Taxonomy" id="5551"/>
    <lineage>
        <taxon>Eukaryota</taxon>
        <taxon>Fungi</taxon>
        <taxon>Dikarya</taxon>
        <taxon>Ascomycota</taxon>
        <taxon>Pezizomycotina</taxon>
        <taxon>Eurotiomycetes</taxon>
        <taxon>Eurotiomycetidae</taxon>
        <taxon>Onygenales</taxon>
        <taxon>Arthrodermataceae</taxon>
        <taxon>Trichophyton</taxon>
    </lineage>
</organism>
<accession>Q6WIH8</accession>
<gene>
    <name type="primary">MEP3</name>
</gene>
<protein>
    <recommendedName>
        <fullName>Extracellular metalloproteinase 3</fullName>
        <ecNumber>3.4.24.-</ecNumber>
    </recommendedName>
    <alternativeName>
        <fullName>Fungalysin MEP3</fullName>
    </alternativeName>
</protein>
<keyword id="KW-0325">Glycoprotein</keyword>
<keyword id="KW-0378">Hydrolase</keyword>
<keyword id="KW-0479">Metal-binding</keyword>
<keyword id="KW-0482">Metalloprotease</keyword>
<keyword id="KW-0645">Protease</keyword>
<keyword id="KW-0964">Secreted</keyword>
<keyword id="KW-0732">Signal</keyword>
<keyword id="KW-0843">Virulence</keyword>
<keyword id="KW-0862">Zinc</keyword>
<keyword id="KW-0865">Zymogen</keyword>
<evidence type="ECO:0000250" key="1"/>
<evidence type="ECO:0000255" key="2"/>
<evidence type="ECO:0000255" key="3">
    <source>
        <dbReference type="PROSITE-ProRule" id="PRU10095"/>
    </source>
</evidence>
<evidence type="ECO:0000269" key="4">
    <source>
    </source>
</evidence>
<evidence type="ECO:0000269" key="5">
    <source>
    </source>
</evidence>
<evidence type="ECO:0000305" key="6"/>
<dbReference type="EC" id="3.4.24.-"/>
<dbReference type="EMBL" id="AY283569">
    <property type="protein sequence ID" value="AAQ21094.1"/>
    <property type="molecule type" value="Genomic_DNA"/>
</dbReference>
<dbReference type="SMR" id="Q6WIH8"/>
<dbReference type="MEROPS" id="M36.001"/>
<dbReference type="GlyCosmos" id="Q6WIH8">
    <property type="glycosylation" value="3 sites, No reported glycans"/>
</dbReference>
<dbReference type="VEuPathDB" id="FungiDB:TERG_03248"/>
<dbReference type="OMA" id="IRKDSYT"/>
<dbReference type="GO" id="GO:0005576">
    <property type="term" value="C:extracellular region"/>
    <property type="evidence" value="ECO:0007669"/>
    <property type="project" value="UniProtKB-SubCell"/>
</dbReference>
<dbReference type="GO" id="GO:0004222">
    <property type="term" value="F:metalloendopeptidase activity"/>
    <property type="evidence" value="ECO:0007669"/>
    <property type="project" value="InterPro"/>
</dbReference>
<dbReference type="GO" id="GO:0008270">
    <property type="term" value="F:zinc ion binding"/>
    <property type="evidence" value="ECO:0007669"/>
    <property type="project" value="InterPro"/>
</dbReference>
<dbReference type="GO" id="GO:0006508">
    <property type="term" value="P:proteolysis"/>
    <property type="evidence" value="ECO:0007669"/>
    <property type="project" value="UniProtKB-KW"/>
</dbReference>
<dbReference type="CDD" id="cd09596">
    <property type="entry name" value="M36"/>
    <property type="match status" value="1"/>
</dbReference>
<dbReference type="Gene3D" id="3.10.170.10">
    <property type="match status" value="1"/>
</dbReference>
<dbReference type="Gene3D" id="1.10.390.10">
    <property type="entry name" value="Neutral Protease Domain 2"/>
    <property type="match status" value="1"/>
</dbReference>
<dbReference type="InterPro" id="IPR011096">
    <property type="entry name" value="FTP_domain"/>
</dbReference>
<dbReference type="InterPro" id="IPR050371">
    <property type="entry name" value="Fungal_virulence_M36"/>
</dbReference>
<dbReference type="InterPro" id="IPR001842">
    <property type="entry name" value="Peptidase_M36"/>
</dbReference>
<dbReference type="InterPro" id="IPR027268">
    <property type="entry name" value="Peptidase_M4/M1_CTD_sf"/>
</dbReference>
<dbReference type="PANTHER" id="PTHR33478">
    <property type="entry name" value="EXTRACELLULAR METALLOPROTEINASE MEP"/>
    <property type="match status" value="1"/>
</dbReference>
<dbReference type="PANTHER" id="PTHR33478:SF1">
    <property type="entry name" value="EXTRACELLULAR METALLOPROTEINASE MEP"/>
    <property type="match status" value="1"/>
</dbReference>
<dbReference type="Pfam" id="PF07504">
    <property type="entry name" value="FTP"/>
    <property type="match status" value="1"/>
</dbReference>
<dbReference type="Pfam" id="PF02128">
    <property type="entry name" value="Peptidase_M36"/>
    <property type="match status" value="1"/>
</dbReference>
<dbReference type="PRINTS" id="PR00999">
    <property type="entry name" value="FUNGALYSIN"/>
</dbReference>
<dbReference type="SUPFAM" id="SSF55486">
    <property type="entry name" value="Metalloproteases ('zincins'), catalytic domain"/>
    <property type="match status" value="1"/>
</dbReference>
<dbReference type="PROSITE" id="PS00142">
    <property type="entry name" value="ZINC_PROTEASE"/>
    <property type="match status" value="1"/>
</dbReference>
<sequence>MHGLLLAGLLALPMNVLAYPAEQHASNVLSRRGVDIESFRLPLKAKYMDSEATAQKIQAMSFSKDDDYVSTATKLVKSTFPKSTFRVVDDHYIGTNGIGHVHFKQTAHGLDIDNSDFNVNIGRDGKVFSFGNSFFTGEIPKENPMVKRAFSDPVKALKGAVKALNLPVKSDNAKPKTIAGKESFEFMGTTGALSAPKANLVYLQKEDGTLALTWKVETDVGDNWLLTYVDAHNSETVHNVVDYVASAEYKVFAWGLNDPTEGNPTSIRDPWTDASPYTWNSDGMSKYPTTRGNNAIAQDNPTGGSTYINNYRPQSPNLIFSYPWSPTATPPSSYKDFSITQLFYTTNRYHDLLYSFGFNEAAGNFQVNNGNKGGKGNDFAIVNAQDGSGTNNANFATPPDGSPGRMRMYNWTTARPNRDGCLEAGIVIHEYTHGLSNRLCGGPANSACLNALESGGMGEGWGDFYATAIRLKPRDTKNTNYSMGAWAANNPKGIRAYLYSTNLQTNPYMYTSVNSLREVHQIGTVWASMLYDLMWALIEAHGGTYSANPVFRNGVPQDGRHLSMKLVMDGMALQPCNPNFVQARDAILDADRALTNSANKCTIWKAFAKRGLGYGAKYDARNRTGSNKLPPGC</sequence>
<name>MEP3_TRIRU</name>
<proteinExistence type="evidence at protein level"/>
<reference key="1">
    <citation type="journal article" date="2004" name="Microbiology">
        <title>Multiplication of an ancestral gene encoding secreted fungalysin preceded species differentiation in the dermatophytes Trichophyton and Microsporum.</title>
        <authorList>
            <person name="Jousson O."/>
            <person name="Lechenne B."/>
            <person name="Bontems O."/>
            <person name="Capoccia S."/>
            <person name="Mignon B."/>
            <person name="Barblan J."/>
            <person name="Quadroni M."/>
            <person name="Monod M."/>
        </authorList>
    </citation>
    <scope>NUCLEOTIDE SEQUENCE [GENOMIC DNA]</scope>
    <scope>IDENTIFICATION BY MASS SPECTROMETRY</scope>
    <scope>SUBCELLULAR LOCATION</scope>
</reference>
<reference key="2">
    <citation type="journal article" date="2009" name="Eukaryot. Cell">
        <title>Gene expression profiling in the human pathogenic dermatophyte Trichophyton rubrum during growth on proteins.</title>
        <authorList>
            <person name="Zaugg C."/>
            <person name="Monod M."/>
            <person name="Weber J."/>
            <person name="Harshman K."/>
            <person name="Pradervand S."/>
            <person name="Thomas J."/>
            <person name="Bueno M."/>
            <person name="Giddey K."/>
            <person name="Staib P."/>
        </authorList>
    </citation>
    <scope>INDUCTION</scope>
</reference>
<feature type="signal peptide" evidence="2">
    <location>
        <begin position="1"/>
        <end position="18"/>
    </location>
</feature>
<feature type="propeptide" id="PRO_0000380852" evidence="1">
    <location>
        <begin position="19"/>
        <end position="246"/>
    </location>
</feature>
<feature type="chain" id="PRO_0000380853" description="Extracellular metalloproteinase 3">
    <location>
        <begin position="247"/>
        <end position="633"/>
    </location>
</feature>
<feature type="active site" evidence="3">
    <location>
        <position position="430"/>
    </location>
</feature>
<feature type="binding site" evidence="3">
    <location>
        <position position="429"/>
    </location>
    <ligand>
        <name>Zn(2+)</name>
        <dbReference type="ChEBI" id="CHEBI:29105"/>
        <note>catalytic</note>
    </ligand>
</feature>
<feature type="binding site" evidence="3">
    <location>
        <position position="433"/>
    </location>
    <ligand>
        <name>Zn(2+)</name>
        <dbReference type="ChEBI" id="CHEBI:29105"/>
        <note>catalytic</note>
    </ligand>
</feature>
<feature type="glycosylation site" description="N-linked (GlcNAc...) asparagine" evidence="2">
    <location>
        <position position="410"/>
    </location>
</feature>
<feature type="glycosylation site" description="N-linked (GlcNAc...) asparagine" evidence="2">
    <location>
        <position position="480"/>
    </location>
</feature>
<feature type="glycosylation site" description="N-linked (GlcNAc...) asparagine" evidence="2">
    <location>
        <position position="622"/>
    </location>
</feature>
<comment type="function">
    <text evidence="1">Secreted metalloproteinase probably acting as a virulence factor.</text>
</comment>
<comment type="cofactor">
    <cofactor evidence="1">
        <name>Zn(2+)</name>
        <dbReference type="ChEBI" id="CHEBI:29105"/>
    </cofactor>
    <text evidence="1">Binds 1 zinc ion per subunit.</text>
</comment>
<comment type="subcellular location">
    <subcellularLocation>
        <location evidence="4">Secreted</location>
    </subcellularLocation>
</comment>
<comment type="induction">
    <text evidence="5">Expression is strongly increased during growth on protein-rich medium. Expressed at even higher levels when keratin is present in the protein-rich medium.</text>
</comment>
<comment type="similarity">
    <text evidence="6">Belongs to the peptidase M36 family.</text>
</comment>